<accession>Q4ZWY9</accession>
<sequence length="85" mass="9580">MLTIRLALGGSKKRPFYHLTVTDSRNARDGSHKEQVGFFNPVARGQEIRLSVNEERVNYWLSVGAQTSERVAQLLKEHNKTKAAA</sequence>
<reference key="1">
    <citation type="journal article" date="2005" name="Proc. Natl. Acad. Sci. U.S.A.">
        <title>Comparison of the complete genome sequences of Pseudomonas syringae pv. syringae B728a and pv. tomato DC3000.</title>
        <authorList>
            <person name="Feil H."/>
            <person name="Feil W.S."/>
            <person name="Chain P."/>
            <person name="Larimer F."/>
            <person name="Dibartolo G."/>
            <person name="Copeland A."/>
            <person name="Lykidis A."/>
            <person name="Trong S."/>
            <person name="Nolan M."/>
            <person name="Goltsman E."/>
            <person name="Thiel J."/>
            <person name="Malfatti S."/>
            <person name="Loper J.E."/>
            <person name="Lapidus A."/>
            <person name="Detter J.C."/>
            <person name="Land M."/>
            <person name="Richardson P.M."/>
            <person name="Kyrpides N.C."/>
            <person name="Ivanova N."/>
            <person name="Lindow S.E."/>
        </authorList>
    </citation>
    <scope>NUCLEOTIDE SEQUENCE [LARGE SCALE GENOMIC DNA]</scope>
    <source>
        <strain>B728a</strain>
    </source>
</reference>
<dbReference type="EMBL" id="CP000075">
    <property type="protein sequence ID" value="AAY36333.1"/>
    <property type="molecule type" value="Genomic_DNA"/>
</dbReference>
<dbReference type="RefSeq" id="WP_002552521.1">
    <property type="nucleotide sequence ID" value="NC_007005.1"/>
</dbReference>
<dbReference type="RefSeq" id="YP_234371.1">
    <property type="nucleotide sequence ID" value="NC_007005.1"/>
</dbReference>
<dbReference type="SMR" id="Q4ZWY9"/>
<dbReference type="STRING" id="205918.Psyr_1282"/>
<dbReference type="GeneID" id="96217686"/>
<dbReference type="KEGG" id="psb:Psyr_1282"/>
<dbReference type="PATRIC" id="fig|205918.7.peg.1314"/>
<dbReference type="eggNOG" id="COG0228">
    <property type="taxonomic scope" value="Bacteria"/>
</dbReference>
<dbReference type="HOGENOM" id="CLU_100590_5_1_6"/>
<dbReference type="OrthoDB" id="9807878at2"/>
<dbReference type="Proteomes" id="UP000000426">
    <property type="component" value="Chromosome"/>
</dbReference>
<dbReference type="GO" id="GO:0005737">
    <property type="term" value="C:cytoplasm"/>
    <property type="evidence" value="ECO:0007669"/>
    <property type="project" value="UniProtKB-ARBA"/>
</dbReference>
<dbReference type="GO" id="GO:0015935">
    <property type="term" value="C:small ribosomal subunit"/>
    <property type="evidence" value="ECO:0007669"/>
    <property type="project" value="TreeGrafter"/>
</dbReference>
<dbReference type="GO" id="GO:0003735">
    <property type="term" value="F:structural constituent of ribosome"/>
    <property type="evidence" value="ECO:0007669"/>
    <property type="project" value="InterPro"/>
</dbReference>
<dbReference type="GO" id="GO:0006412">
    <property type="term" value="P:translation"/>
    <property type="evidence" value="ECO:0007669"/>
    <property type="project" value="UniProtKB-UniRule"/>
</dbReference>
<dbReference type="Gene3D" id="3.30.1320.10">
    <property type="match status" value="1"/>
</dbReference>
<dbReference type="HAMAP" id="MF_00385">
    <property type="entry name" value="Ribosomal_bS16"/>
    <property type="match status" value="1"/>
</dbReference>
<dbReference type="InterPro" id="IPR000307">
    <property type="entry name" value="Ribosomal_bS16"/>
</dbReference>
<dbReference type="InterPro" id="IPR023803">
    <property type="entry name" value="Ribosomal_bS16_dom_sf"/>
</dbReference>
<dbReference type="NCBIfam" id="TIGR00002">
    <property type="entry name" value="S16"/>
    <property type="match status" value="1"/>
</dbReference>
<dbReference type="PANTHER" id="PTHR12919">
    <property type="entry name" value="30S RIBOSOMAL PROTEIN S16"/>
    <property type="match status" value="1"/>
</dbReference>
<dbReference type="PANTHER" id="PTHR12919:SF20">
    <property type="entry name" value="SMALL RIBOSOMAL SUBUNIT PROTEIN BS16M"/>
    <property type="match status" value="1"/>
</dbReference>
<dbReference type="Pfam" id="PF00886">
    <property type="entry name" value="Ribosomal_S16"/>
    <property type="match status" value="1"/>
</dbReference>
<dbReference type="SUPFAM" id="SSF54565">
    <property type="entry name" value="Ribosomal protein S16"/>
    <property type="match status" value="1"/>
</dbReference>
<comment type="similarity">
    <text evidence="1">Belongs to the bacterial ribosomal protein bS16 family.</text>
</comment>
<protein>
    <recommendedName>
        <fullName evidence="1">Small ribosomal subunit protein bS16</fullName>
    </recommendedName>
    <alternativeName>
        <fullName evidence="2">30S ribosomal protein S16</fullName>
    </alternativeName>
</protein>
<feature type="chain" id="PRO_0000243852" description="Small ribosomal subunit protein bS16">
    <location>
        <begin position="1"/>
        <end position="85"/>
    </location>
</feature>
<keyword id="KW-0687">Ribonucleoprotein</keyword>
<keyword id="KW-0689">Ribosomal protein</keyword>
<organism>
    <name type="scientific">Pseudomonas syringae pv. syringae (strain B728a)</name>
    <dbReference type="NCBI Taxonomy" id="205918"/>
    <lineage>
        <taxon>Bacteria</taxon>
        <taxon>Pseudomonadati</taxon>
        <taxon>Pseudomonadota</taxon>
        <taxon>Gammaproteobacteria</taxon>
        <taxon>Pseudomonadales</taxon>
        <taxon>Pseudomonadaceae</taxon>
        <taxon>Pseudomonas</taxon>
        <taxon>Pseudomonas syringae</taxon>
    </lineage>
</organism>
<gene>
    <name evidence="1" type="primary">rpsP</name>
    <name type="ordered locus">Psyr_1282</name>
</gene>
<name>RS16_PSEU2</name>
<evidence type="ECO:0000255" key="1">
    <source>
        <dbReference type="HAMAP-Rule" id="MF_00385"/>
    </source>
</evidence>
<evidence type="ECO:0000305" key="2"/>
<proteinExistence type="inferred from homology"/>